<accession>P85774</accession>
<reference evidence="4" key="1">
    <citation type="journal article" date="2009" name="BMC Evol. Biol.">
        <title>A proteomic approach for studying insect phylogeny: CAPA peptides of ancient insect taxa (Dictyoptera, Blattoptera) as a test case.</title>
        <authorList>
            <person name="Roth S."/>
            <person name="Fromm B."/>
            <person name="Gaede G."/>
            <person name="Predel R."/>
        </authorList>
    </citation>
    <scope>PROTEIN SEQUENCE</scope>
    <scope>AMIDATION AT VAL-11</scope>
    <source>
        <tissue evidence="2">Abdominal perisympathetic organs</tissue>
    </source>
</reference>
<keyword id="KW-0027">Amidation</keyword>
<keyword id="KW-0903">Direct protein sequencing</keyword>
<keyword id="KW-0527">Neuropeptide</keyword>
<keyword id="KW-0964">Secreted</keyword>
<feature type="peptide" id="PRO_0000378770" description="Periviscerokinin-1" evidence="2">
    <location>
        <begin position="1"/>
        <end position="11"/>
    </location>
</feature>
<feature type="modified residue" description="Valine amide" evidence="2">
    <location>
        <position position="11"/>
    </location>
</feature>
<name>PVK1_SUPDI</name>
<sequence length="11" mass="1087">GSSGLIAMPRV</sequence>
<dbReference type="GO" id="GO:0005576">
    <property type="term" value="C:extracellular region"/>
    <property type="evidence" value="ECO:0007669"/>
    <property type="project" value="UniProtKB-SubCell"/>
</dbReference>
<dbReference type="GO" id="GO:0007218">
    <property type="term" value="P:neuropeptide signaling pathway"/>
    <property type="evidence" value="ECO:0007669"/>
    <property type="project" value="UniProtKB-KW"/>
</dbReference>
<dbReference type="InterPro" id="IPR013231">
    <property type="entry name" value="Periviscerokinin"/>
</dbReference>
<dbReference type="Pfam" id="PF08259">
    <property type="entry name" value="Periviscerokin"/>
    <property type="match status" value="1"/>
</dbReference>
<organism>
    <name type="scientific">Supella dimidiata</name>
    <name type="common">Cockroach</name>
    <dbReference type="NCBI Taxonomy" id="521517"/>
    <lineage>
        <taxon>Eukaryota</taxon>
        <taxon>Metazoa</taxon>
        <taxon>Ecdysozoa</taxon>
        <taxon>Arthropoda</taxon>
        <taxon>Hexapoda</taxon>
        <taxon>Insecta</taxon>
        <taxon>Pterygota</taxon>
        <taxon>Neoptera</taxon>
        <taxon>Polyneoptera</taxon>
        <taxon>Dictyoptera</taxon>
        <taxon>Blattodea</taxon>
        <taxon>Blaberoidea</taxon>
        <taxon>Ectobiidae</taxon>
        <taxon>Plectopterinae</taxon>
        <taxon>Supella</taxon>
    </lineage>
</organism>
<proteinExistence type="evidence at protein level"/>
<comment type="function">
    <text evidence="4">Mediates visceral muscle contractile activity (myotropic activity).</text>
</comment>
<comment type="subcellular location">
    <subcellularLocation>
        <location evidence="4">Secreted</location>
    </subcellularLocation>
</comment>
<comment type="similarity">
    <text evidence="1">Belongs to the periviscerokinin family.</text>
</comment>
<protein>
    <recommendedName>
        <fullName evidence="3">Periviscerokinin-1</fullName>
        <shortName evidence="3">SupDi-PVK-1</shortName>
    </recommendedName>
</protein>
<evidence type="ECO:0000255" key="1"/>
<evidence type="ECO:0000269" key="2">
    <source>
    </source>
</evidence>
<evidence type="ECO:0000303" key="3">
    <source>
    </source>
</evidence>
<evidence type="ECO:0000305" key="4"/>